<name>CLP1_NEOFI</name>
<reference key="1">
    <citation type="journal article" date="2008" name="PLoS Genet.">
        <title>Genomic islands in the pathogenic filamentous fungus Aspergillus fumigatus.</title>
        <authorList>
            <person name="Fedorova N.D."/>
            <person name="Khaldi N."/>
            <person name="Joardar V.S."/>
            <person name="Maiti R."/>
            <person name="Amedeo P."/>
            <person name="Anderson M.J."/>
            <person name="Crabtree J."/>
            <person name="Silva J.C."/>
            <person name="Badger J.H."/>
            <person name="Albarraq A."/>
            <person name="Angiuoli S."/>
            <person name="Bussey H."/>
            <person name="Bowyer P."/>
            <person name="Cotty P.J."/>
            <person name="Dyer P.S."/>
            <person name="Egan A."/>
            <person name="Galens K."/>
            <person name="Fraser-Liggett C.M."/>
            <person name="Haas B.J."/>
            <person name="Inman J.M."/>
            <person name="Kent R."/>
            <person name="Lemieux S."/>
            <person name="Malavazi I."/>
            <person name="Orvis J."/>
            <person name="Roemer T."/>
            <person name="Ronning C.M."/>
            <person name="Sundaram J.P."/>
            <person name="Sutton G."/>
            <person name="Turner G."/>
            <person name="Venter J.C."/>
            <person name="White O.R."/>
            <person name="Whitty B.R."/>
            <person name="Youngman P."/>
            <person name="Wolfe K.H."/>
            <person name="Goldman G.H."/>
            <person name="Wortman J.R."/>
            <person name="Jiang B."/>
            <person name="Denning D.W."/>
            <person name="Nierman W.C."/>
        </authorList>
    </citation>
    <scope>NUCLEOTIDE SEQUENCE [LARGE SCALE GENOMIC DNA]</scope>
    <source>
        <strain>ATCC 1020 / DSM 3700 / CBS 544.65 / FGSC A1164 / JCM 1740 / NRRL 181 / WB 181</strain>
    </source>
</reference>
<comment type="function">
    <text evidence="1">Required for endonucleolytic cleavage during polyadenylation-dependent pre-mRNA 3'-end formation.</text>
</comment>
<comment type="subunit">
    <text evidence="1">Component of a pre-mRNA cleavage factor complex. Interacts directly with PCF11.</text>
</comment>
<comment type="subcellular location">
    <subcellularLocation>
        <location evidence="1">Nucleus</location>
    </subcellularLocation>
</comment>
<comment type="similarity">
    <text evidence="1">Belongs to the Clp1 family. Clp1 subfamily.</text>
</comment>
<comment type="caution">
    <text evidence="3">May lack the polyribonucleotide 5'-hydroxyl-kinase and polynucleotide 5'-hydroxyl-kinase activities that are characteristic of the human ortholog.</text>
</comment>
<organism>
    <name type="scientific">Neosartorya fischeri (strain ATCC 1020 / DSM 3700 / CBS 544.65 / FGSC A1164 / JCM 1740 / NRRL 181 / WB 181)</name>
    <name type="common">Aspergillus fischerianus</name>
    <dbReference type="NCBI Taxonomy" id="331117"/>
    <lineage>
        <taxon>Eukaryota</taxon>
        <taxon>Fungi</taxon>
        <taxon>Dikarya</taxon>
        <taxon>Ascomycota</taxon>
        <taxon>Pezizomycotina</taxon>
        <taxon>Eurotiomycetes</taxon>
        <taxon>Eurotiomycetidae</taxon>
        <taxon>Eurotiales</taxon>
        <taxon>Aspergillaceae</taxon>
        <taxon>Aspergillus</taxon>
        <taxon>Aspergillus subgen. Fumigati</taxon>
    </lineage>
</organism>
<gene>
    <name type="primary">clp1</name>
    <name type="ORF">NFIA_075860</name>
</gene>
<protein>
    <recommendedName>
        <fullName evidence="1">mRNA cleavage and polyadenylation factor clp1</fullName>
    </recommendedName>
</protein>
<proteinExistence type="inferred from homology"/>
<dbReference type="EMBL" id="DS027696">
    <property type="protein sequence ID" value="EAW17656.1"/>
    <property type="molecule type" value="Genomic_DNA"/>
</dbReference>
<dbReference type="RefSeq" id="XP_001259553.1">
    <property type="nucleotide sequence ID" value="XM_001259552.1"/>
</dbReference>
<dbReference type="SMR" id="A1DE49"/>
<dbReference type="STRING" id="331117.A1DE49"/>
<dbReference type="EnsemblFungi" id="EAW17656">
    <property type="protein sequence ID" value="EAW17656"/>
    <property type="gene ID" value="NFIA_075860"/>
</dbReference>
<dbReference type="GeneID" id="4586325"/>
<dbReference type="KEGG" id="nfi:NFIA_075860"/>
<dbReference type="VEuPathDB" id="FungiDB:NFIA_075860"/>
<dbReference type="eggNOG" id="KOG2749">
    <property type="taxonomic scope" value="Eukaryota"/>
</dbReference>
<dbReference type="HOGENOM" id="CLU_018195_3_1_1"/>
<dbReference type="OMA" id="VQYVNCH"/>
<dbReference type="OrthoDB" id="258143at2759"/>
<dbReference type="Proteomes" id="UP000006702">
    <property type="component" value="Unassembled WGS sequence"/>
</dbReference>
<dbReference type="GO" id="GO:0005849">
    <property type="term" value="C:mRNA cleavage factor complex"/>
    <property type="evidence" value="ECO:0007669"/>
    <property type="project" value="UniProtKB-UniRule"/>
</dbReference>
<dbReference type="GO" id="GO:0005524">
    <property type="term" value="F:ATP binding"/>
    <property type="evidence" value="ECO:0007669"/>
    <property type="project" value="UniProtKB-UniRule"/>
</dbReference>
<dbReference type="GO" id="GO:0051731">
    <property type="term" value="F:polynucleotide 5'-hydroxyl-kinase activity"/>
    <property type="evidence" value="ECO:0007669"/>
    <property type="project" value="InterPro"/>
</dbReference>
<dbReference type="GO" id="GO:0031124">
    <property type="term" value="P:mRNA 3'-end processing"/>
    <property type="evidence" value="ECO:0007669"/>
    <property type="project" value="UniProtKB-UniRule"/>
</dbReference>
<dbReference type="GO" id="GO:0006388">
    <property type="term" value="P:tRNA splicing, via endonucleolytic cleavage and ligation"/>
    <property type="evidence" value="ECO:0007669"/>
    <property type="project" value="TreeGrafter"/>
</dbReference>
<dbReference type="FunFam" id="3.40.50.300:FF:002095">
    <property type="entry name" value="mRNA cleavage and polyadenylation factor clp1"/>
    <property type="match status" value="1"/>
</dbReference>
<dbReference type="FunFam" id="2.60.120.1030:FF:000001">
    <property type="entry name" value="Protein CLP1 homolog 5"/>
    <property type="match status" value="1"/>
</dbReference>
<dbReference type="Gene3D" id="2.60.120.1030">
    <property type="entry name" value="Clp1, DNA binding domain"/>
    <property type="match status" value="1"/>
</dbReference>
<dbReference type="Gene3D" id="3.40.50.300">
    <property type="entry name" value="P-loop containing nucleotide triphosphate hydrolases"/>
    <property type="match status" value="1"/>
</dbReference>
<dbReference type="Gene3D" id="2.40.30.330">
    <property type="entry name" value="Pre-mRNA cleavage complex subunit Clp1, C-terminal domain"/>
    <property type="match status" value="1"/>
</dbReference>
<dbReference type="HAMAP" id="MF_03035">
    <property type="entry name" value="Clp1"/>
    <property type="match status" value="1"/>
</dbReference>
<dbReference type="InterPro" id="IPR028606">
    <property type="entry name" value="Clp1"/>
</dbReference>
<dbReference type="InterPro" id="IPR045116">
    <property type="entry name" value="Clp1/Grc3"/>
</dbReference>
<dbReference type="InterPro" id="IPR010655">
    <property type="entry name" value="Clp1_C"/>
</dbReference>
<dbReference type="InterPro" id="IPR038238">
    <property type="entry name" value="Clp1_C_sf"/>
</dbReference>
<dbReference type="InterPro" id="IPR032324">
    <property type="entry name" value="Clp1_N"/>
</dbReference>
<dbReference type="InterPro" id="IPR038239">
    <property type="entry name" value="Clp1_N_sf"/>
</dbReference>
<dbReference type="InterPro" id="IPR032319">
    <property type="entry name" value="CLP1_P"/>
</dbReference>
<dbReference type="InterPro" id="IPR027417">
    <property type="entry name" value="P-loop_NTPase"/>
</dbReference>
<dbReference type="PANTHER" id="PTHR12755">
    <property type="entry name" value="CLEAVAGE/POLYADENYLATION FACTOR IA SUBUNIT CLP1P"/>
    <property type="match status" value="1"/>
</dbReference>
<dbReference type="PANTHER" id="PTHR12755:SF6">
    <property type="entry name" value="POLYRIBONUCLEOTIDE 5'-HYDROXYL-KINASE CLP1"/>
    <property type="match status" value="1"/>
</dbReference>
<dbReference type="Pfam" id="PF06807">
    <property type="entry name" value="Clp1"/>
    <property type="match status" value="1"/>
</dbReference>
<dbReference type="Pfam" id="PF16573">
    <property type="entry name" value="CLP1_N"/>
    <property type="match status" value="1"/>
</dbReference>
<dbReference type="Pfam" id="PF16575">
    <property type="entry name" value="CLP1_P"/>
    <property type="match status" value="1"/>
</dbReference>
<dbReference type="SUPFAM" id="SSF52540">
    <property type="entry name" value="P-loop containing nucleoside triphosphate hydrolases"/>
    <property type="match status" value="1"/>
</dbReference>
<feature type="chain" id="PRO_0000375211" description="mRNA cleavage and polyadenylation factor clp1">
    <location>
        <begin position="1"/>
        <end position="559"/>
    </location>
</feature>
<feature type="region of interest" description="Disordered" evidence="2">
    <location>
        <begin position="415"/>
        <end position="483"/>
    </location>
</feature>
<feature type="compositionally biased region" description="Low complexity" evidence="2">
    <location>
        <begin position="466"/>
        <end position="479"/>
    </location>
</feature>
<feature type="binding site" evidence="1">
    <location>
        <position position="32"/>
    </location>
    <ligand>
        <name>ATP</name>
        <dbReference type="ChEBI" id="CHEBI:30616"/>
    </ligand>
</feature>
<feature type="binding site" evidence="1">
    <location>
        <position position="71"/>
    </location>
    <ligand>
        <name>ATP</name>
        <dbReference type="ChEBI" id="CHEBI:30616"/>
    </ligand>
</feature>
<feature type="binding site" evidence="1">
    <location>
        <begin position="159"/>
        <end position="164"/>
    </location>
    <ligand>
        <name>ATP</name>
        <dbReference type="ChEBI" id="CHEBI:30616"/>
    </ligand>
</feature>
<evidence type="ECO:0000255" key="1">
    <source>
        <dbReference type="HAMAP-Rule" id="MF_03035"/>
    </source>
</evidence>
<evidence type="ECO:0000256" key="2">
    <source>
        <dbReference type="SAM" id="MobiDB-lite"/>
    </source>
</evidence>
<evidence type="ECO:0000305" key="3"/>
<keyword id="KW-0067">ATP-binding</keyword>
<keyword id="KW-0507">mRNA processing</keyword>
<keyword id="KW-0547">Nucleotide-binding</keyword>
<keyword id="KW-0539">Nucleus</keyword>
<keyword id="KW-1185">Reference proteome</keyword>
<sequence length="559" mass="58649">MSLPGLELSQTSSEREFVPAPPTQITLSKGSEWRFEVAFGTAIRVKLLAGTAELFGTELAASQTYTFSGTKAAIYTWHGCTLEVSAGDTISTIDGLGPAGLNGEGARGYGAGGCQSEYTAEETPMVEYANVHFALEAMRQEAKATGKDGPRVLILGPENAGKTSVAKILTAYATKVGRQPIVVNLDPAEGMLSVPGTLTATAFRTMMNVEEGWGSSPMSGPSAVPVKLPLVYFYPLQNPLEAEGAVYRPIVSRLALSVTGRMAEDEDTRETGIIVDTPGILSAGKPGSLEIINHIVTEFAITTILVIGSERLYSTMMKNYDNKPTSSASAAASDERITVVKLSKSGGCVDRDAAFMKSVRESQIRTYFFGNPIPSTASAALSMSASSTTNVTLSPHAQQLDYDSLAVYNYTIASSDEDEDEYDPSQFGTSDTFLPKGSNDAEGPEAKHAEETSFASSVPGLGGSSGEDAASGSSAVPLKKVPPPAPNTLANSLLAVTHAAPNASPAEIRDASIMGFLYVADVDSEKGKIRVLAPIGGRVPPRAIVWGKKWPGEVVGLVG</sequence>
<accession>A1DE49</accession>